<dbReference type="EC" id="3.1.26.4" evidence="1"/>
<dbReference type="EMBL" id="AE002098">
    <property type="protein sequence ID" value="AAF41970.1"/>
    <property type="molecule type" value="Genomic_DNA"/>
</dbReference>
<dbReference type="PIR" id="H81061">
    <property type="entry name" value="H81061"/>
</dbReference>
<dbReference type="RefSeq" id="NP_274624.1">
    <property type="nucleotide sequence ID" value="NC_003112.2"/>
</dbReference>
<dbReference type="RefSeq" id="WP_002225009.1">
    <property type="nucleotide sequence ID" value="NC_003112.2"/>
</dbReference>
<dbReference type="SMR" id="Q9JYE5"/>
<dbReference type="FunCoup" id="Q9JYE5">
    <property type="interactions" value="226"/>
</dbReference>
<dbReference type="STRING" id="122586.NMB1618"/>
<dbReference type="PaxDb" id="122586-NMB1618"/>
<dbReference type="KEGG" id="nme:NMB1618"/>
<dbReference type="PATRIC" id="fig|122586.8.peg.2079"/>
<dbReference type="HOGENOM" id="CLU_030894_6_0_4"/>
<dbReference type="InParanoid" id="Q9JYE5"/>
<dbReference type="OrthoDB" id="7845843at2"/>
<dbReference type="Proteomes" id="UP000000425">
    <property type="component" value="Chromosome"/>
</dbReference>
<dbReference type="GO" id="GO:0005737">
    <property type="term" value="C:cytoplasm"/>
    <property type="evidence" value="ECO:0007669"/>
    <property type="project" value="UniProtKB-SubCell"/>
</dbReference>
<dbReference type="GO" id="GO:0000287">
    <property type="term" value="F:magnesium ion binding"/>
    <property type="evidence" value="ECO:0007669"/>
    <property type="project" value="UniProtKB-UniRule"/>
</dbReference>
<dbReference type="GO" id="GO:0003676">
    <property type="term" value="F:nucleic acid binding"/>
    <property type="evidence" value="ECO:0007669"/>
    <property type="project" value="InterPro"/>
</dbReference>
<dbReference type="GO" id="GO:0004523">
    <property type="term" value="F:RNA-DNA hybrid ribonuclease activity"/>
    <property type="evidence" value="ECO:0000318"/>
    <property type="project" value="GO_Central"/>
</dbReference>
<dbReference type="GO" id="GO:0043137">
    <property type="term" value="P:DNA replication, removal of RNA primer"/>
    <property type="evidence" value="ECO:0000318"/>
    <property type="project" value="GO_Central"/>
</dbReference>
<dbReference type="CDD" id="cd09278">
    <property type="entry name" value="RNase_HI_prokaryote_like"/>
    <property type="match status" value="1"/>
</dbReference>
<dbReference type="FunFam" id="3.30.420.10:FF:000008">
    <property type="entry name" value="Ribonuclease H"/>
    <property type="match status" value="1"/>
</dbReference>
<dbReference type="Gene3D" id="3.30.420.10">
    <property type="entry name" value="Ribonuclease H-like superfamily/Ribonuclease H"/>
    <property type="match status" value="1"/>
</dbReference>
<dbReference type="HAMAP" id="MF_00042">
    <property type="entry name" value="RNase_H"/>
    <property type="match status" value="1"/>
</dbReference>
<dbReference type="InterPro" id="IPR050092">
    <property type="entry name" value="RNase_H"/>
</dbReference>
<dbReference type="InterPro" id="IPR012337">
    <property type="entry name" value="RNaseH-like_sf"/>
</dbReference>
<dbReference type="InterPro" id="IPR002156">
    <property type="entry name" value="RNaseH_domain"/>
</dbReference>
<dbReference type="InterPro" id="IPR036397">
    <property type="entry name" value="RNaseH_sf"/>
</dbReference>
<dbReference type="InterPro" id="IPR022892">
    <property type="entry name" value="RNaseHI"/>
</dbReference>
<dbReference type="NCBIfam" id="NF001236">
    <property type="entry name" value="PRK00203.1"/>
    <property type="match status" value="1"/>
</dbReference>
<dbReference type="PANTHER" id="PTHR10642">
    <property type="entry name" value="RIBONUCLEASE H1"/>
    <property type="match status" value="1"/>
</dbReference>
<dbReference type="PANTHER" id="PTHR10642:SF26">
    <property type="entry name" value="RIBONUCLEASE H1"/>
    <property type="match status" value="1"/>
</dbReference>
<dbReference type="Pfam" id="PF00075">
    <property type="entry name" value="RNase_H"/>
    <property type="match status" value="1"/>
</dbReference>
<dbReference type="SUPFAM" id="SSF53098">
    <property type="entry name" value="Ribonuclease H-like"/>
    <property type="match status" value="1"/>
</dbReference>
<dbReference type="PROSITE" id="PS50879">
    <property type="entry name" value="RNASE_H_1"/>
    <property type="match status" value="1"/>
</dbReference>
<feature type="chain" id="PRO_0000195385" description="Ribonuclease HI">
    <location>
        <begin position="1"/>
        <end position="145"/>
    </location>
</feature>
<feature type="domain" description="RNase H type-1" evidence="2">
    <location>
        <begin position="1"/>
        <end position="142"/>
    </location>
</feature>
<feature type="binding site" evidence="1">
    <location>
        <position position="10"/>
    </location>
    <ligand>
        <name>Mg(2+)</name>
        <dbReference type="ChEBI" id="CHEBI:18420"/>
        <label>1</label>
    </ligand>
</feature>
<feature type="binding site" evidence="1">
    <location>
        <position position="10"/>
    </location>
    <ligand>
        <name>Mg(2+)</name>
        <dbReference type="ChEBI" id="CHEBI:18420"/>
        <label>2</label>
    </ligand>
</feature>
<feature type="binding site" evidence="1">
    <location>
        <position position="48"/>
    </location>
    <ligand>
        <name>Mg(2+)</name>
        <dbReference type="ChEBI" id="CHEBI:18420"/>
        <label>1</label>
    </ligand>
</feature>
<feature type="binding site" evidence="1">
    <location>
        <position position="70"/>
    </location>
    <ligand>
        <name>Mg(2+)</name>
        <dbReference type="ChEBI" id="CHEBI:18420"/>
        <label>1</label>
    </ligand>
</feature>
<feature type="binding site" evidence="1">
    <location>
        <position position="134"/>
    </location>
    <ligand>
        <name>Mg(2+)</name>
        <dbReference type="ChEBI" id="CHEBI:18420"/>
        <label>2</label>
    </ligand>
</feature>
<keyword id="KW-0963">Cytoplasm</keyword>
<keyword id="KW-0255">Endonuclease</keyword>
<keyword id="KW-0378">Hydrolase</keyword>
<keyword id="KW-0460">Magnesium</keyword>
<keyword id="KW-0479">Metal-binding</keyword>
<keyword id="KW-0540">Nuclease</keyword>
<keyword id="KW-1185">Reference proteome</keyword>
<protein>
    <recommendedName>
        <fullName evidence="1">Ribonuclease HI</fullName>
        <shortName evidence="1">RNase HI</shortName>
        <ecNumber evidence="1">3.1.26.4</ecNumber>
    </recommendedName>
</protein>
<organism>
    <name type="scientific">Neisseria meningitidis serogroup B (strain ATCC BAA-335 / MC58)</name>
    <dbReference type="NCBI Taxonomy" id="122586"/>
    <lineage>
        <taxon>Bacteria</taxon>
        <taxon>Pseudomonadati</taxon>
        <taxon>Pseudomonadota</taxon>
        <taxon>Betaproteobacteria</taxon>
        <taxon>Neisseriales</taxon>
        <taxon>Neisseriaceae</taxon>
        <taxon>Neisseria</taxon>
    </lineage>
</organism>
<name>RNH_NEIMB</name>
<accession>Q9JYE5</accession>
<gene>
    <name evidence="1" type="primary">rnhA</name>
    <name type="ordered locus">NMB1618</name>
</gene>
<evidence type="ECO:0000255" key="1">
    <source>
        <dbReference type="HAMAP-Rule" id="MF_00042"/>
    </source>
</evidence>
<evidence type="ECO:0000255" key="2">
    <source>
        <dbReference type="PROSITE-ProRule" id="PRU00408"/>
    </source>
</evidence>
<comment type="function">
    <text evidence="1">Endonuclease that specifically degrades the RNA of RNA-DNA hybrids.</text>
</comment>
<comment type="catalytic activity">
    <reaction evidence="1">
        <text>Endonucleolytic cleavage to 5'-phosphomonoester.</text>
        <dbReference type="EC" id="3.1.26.4"/>
    </reaction>
</comment>
<comment type="cofactor">
    <cofactor evidence="1">
        <name>Mg(2+)</name>
        <dbReference type="ChEBI" id="CHEBI:18420"/>
    </cofactor>
    <text evidence="1">Binds 1 Mg(2+) ion per subunit. May bind a second metal ion at a regulatory site, or after substrate binding.</text>
</comment>
<comment type="subunit">
    <text evidence="1">Monomer.</text>
</comment>
<comment type="subcellular location">
    <subcellularLocation>
        <location evidence="1">Cytoplasm</location>
    </subcellularLocation>
</comment>
<comment type="similarity">
    <text evidence="1">Belongs to the RNase H family.</text>
</comment>
<sequence>MNQTVYLYTDGACKGNPGAGGWGVLMRYGSHEKELFGGEAQTTNNRMELTAVIEGLKSLKRRCTVIICTDSQYVKNGMENWIHGWKRNGWKTASKQPVKNDDLWKELDALVGRHQVSWTWVKGHAGHAENERADDLANRGAAQFS</sequence>
<reference key="1">
    <citation type="journal article" date="2000" name="Science">
        <title>Complete genome sequence of Neisseria meningitidis serogroup B strain MC58.</title>
        <authorList>
            <person name="Tettelin H."/>
            <person name="Saunders N.J."/>
            <person name="Heidelberg J.F."/>
            <person name="Jeffries A.C."/>
            <person name="Nelson K.E."/>
            <person name="Eisen J.A."/>
            <person name="Ketchum K.A."/>
            <person name="Hood D.W."/>
            <person name="Peden J.F."/>
            <person name="Dodson R.J."/>
            <person name="Nelson W.C."/>
            <person name="Gwinn M.L."/>
            <person name="DeBoy R.T."/>
            <person name="Peterson J.D."/>
            <person name="Hickey E.K."/>
            <person name="Haft D.H."/>
            <person name="Salzberg S.L."/>
            <person name="White O."/>
            <person name="Fleischmann R.D."/>
            <person name="Dougherty B.A."/>
            <person name="Mason T.M."/>
            <person name="Ciecko A."/>
            <person name="Parksey D.S."/>
            <person name="Blair E."/>
            <person name="Cittone H."/>
            <person name="Clark E.B."/>
            <person name="Cotton M.D."/>
            <person name="Utterback T.R."/>
            <person name="Khouri H.M."/>
            <person name="Qin H."/>
            <person name="Vamathevan J.J."/>
            <person name="Gill J."/>
            <person name="Scarlato V."/>
            <person name="Masignani V."/>
            <person name="Pizza M."/>
            <person name="Grandi G."/>
            <person name="Sun L."/>
            <person name="Smith H.O."/>
            <person name="Fraser C.M."/>
            <person name="Moxon E.R."/>
            <person name="Rappuoli R."/>
            <person name="Venter J.C."/>
        </authorList>
    </citation>
    <scope>NUCLEOTIDE SEQUENCE [LARGE SCALE GENOMIC DNA]</scope>
    <source>
        <strain>ATCC BAA-335 / MC58</strain>
    </source>
</reference>
<proteinExistence type="inferred from homology"/>